<protein>
    <recommendedName>
        <fullName evidence="1">Ribosomal RNA small subunit methyltransferase A</fullName>
        <ecNumber evidence="1">2.1.1.182</ecNumber>
    </recommendedName>
    <alternativeName>
        <fullName evidence="1">16S rRNA (adenine(1518)-N(6)/adenine(1519)-N(6))-dimethyltransferase</fullName>
    </alternativeName>
    <alternativeName>
        <fullName evidence="1">16S rRNA dimethyladenosine transferase</fullName>
    </alternativeName>
    <alternativeName>
        <fullName evidence="1">16S rRNA dimethylase</fullName>
    </alternativeName>
    <alternativeName>
        <fullName evidence="1">S-adenosylmethionine-6-N', N'-adenosyl(rRNA) dimethyltransferase</fullName>
    </alternativeName>
</protein>
<evidence type="ECO:0000255" key="1">
    <source>
        <dbReference type="HAMAP-Rule" id="MF_00607"/>
    </source>
</evidence>
<keyword id="KW-0963">Cytoplasm</keyword>
<keyword id="KW-0489">Methyltransferase</keyword>
<keyword id="KW-0694">RNA-binding</keyword>
<keyword id="KW-0698">rRNA processing</keyword>
<keyword id="KW-0949">S-adenosyl-L-methionine</keyword>
<keyword id="KW-0808">Transferase</keyword>
<organism>
    <name type="scientific">Francisella tularensis subsp. tularensis (strain FSC 198)</name>
    <dbReference type="NCBI Taxonomy" id="393115"/>
    <lineage>
        <taxon>Bacteria</taxon>
        <taxon>Pseudomonadati</taxon>
        <taxon>Pseudomonadota</taxon>
        <taxon>Gammaproteobacteria</taxon>
        <taxon>Thiotrichales</taxon>
        <taxon>Francisellaceae</taxon>
        <taxon>Francisella</taxon>
    </lineage>
</organism>
<feature type="chain" id="PRO_0000257290" description="Ribosomal RNA small subunit methyltransferase A">
    <location>
        <begin position="1"/>
        <end position="262"/>
    </location>
</feature>
<feature type="binding site" evidence="1">
    <location>
        <position position="14"/>
    </location>
    <ligand>
        <name>S-adenosyl-L-methionine</name>
        <dbReference type="ChEBI" id="CHEBI:59789"/>
    </ligand>
</feature>
<feature type="binding site" evidence="1">
    <location>
        <position position="16"/>
    </location>
    <ligand>
        <name>S-adenosyl-L-methionine</name>
        <dbReference type="ChEBI" id="CHEBI:59789"/>
    </ligand>
</feature>
<feature type="binding site" evidence="1">
    <location>
        <position position="41"/>
    </location>
    <ligand>
        <name>S-adenosyl-L-methionine</name>
        <dbReference type="ChEBI" id="CHEBI:59789"/>
    </ligand>
</feature>
<feature type="binding site" evidence="1">
    <location>
        <position position="62"/>
    </location>
    <ligand>
        <name>S-adenosyl-L-methionine</name>
        <dbReference type="ChEBI" id="CHEBI:59789"/>
    </ligand>
</feature>
<feature type="binding site" evidence="1">
    <location>
        <position position="87"/>
    </location>
    <ligand>
        <name>S-adenosyl-L-methionine</name>
        <dbReference type="ChEBI" id="CHEBI:59789"/>
    </ligand>
</feature>
<feature type="binding site" evidence="1">
    <location>
        <position position="109"/>
    </location>
    <ligand>
        <name>S-adenosyl-L-methionine</name>
        <dbReference type="ChEBI" id="CHEBI:59789"/>
    </ligand>
</feature>
<accession>Q14IY7</accession>
<comment type="function">
    <text evidence="1">Specifically dimethylates two adjacent adenosines (A1518 and A1519) in the loop of a conserved hairpin near the 3'-end of 16S rRNA in the 30S particle. May play a critical role in biogenesis of 30S subunits.</text>
</comment>
<comment type="catalytic activity">
    <reaction evidence="1">
        <text>adenosine(1518)/adenosine(1519) in 16S rRNA + 4 S-adenosyl-L-methionine = N(6)-dimethyladenosine(1518)/N(6)-dimethyladenosine(1519) in 16S rRNA + 4 S-adenosyl-L-homocysteine + 4 H(+)</text>
        <dbReference type="Rhea" id="RHEA:19609"/>
        <dbReference type="Rhea" id="RHEA-COMP:10232"/>
        <dbReference type="Rhea" id="RHEA-COMP:10233"/>
        <dbReference type="ChEBI" id="CHEBI:15378"/>
        <dbReference type="ChEBI" id="CHEBI:57856"/>
        <dbReference type="ChEBI" id="CHEBI:59789"/>
        <dbReference type="ChEBI" id="CHEBI:74411"/>
        <dbReference type="ChEBI" id="CHEBI:74493"/>
        <dbReference type="EC" id="2.1.1.182"/>
    </reaction>
</comment>
<comment type="subcellular location">
    <subcellularLocation>
        <location evidence="1">Cytoplasm</location>
    </subcellularLocation>
</comment>
<comment type="similarity">
    <text evidence="1">Belongs to the class I-like SAM-binding methyltransferase superfamily. rRNA adenine N(6)-methyltransferase family. RsmA subfamily.</text>
</comment>
<reference key="1">
    <citation type="journal article" date="2007" name="PLoS ONE">
        <title>Genome sequencing shows that European isolates of Francisella tularensis subspecies tularensis are almost identical to US laboratory strain Schu S4.</title>
        <authorList>
            <person name="Chaudhuri R.R."/>
            <person name="Ren C.-P."/>
            <person name="Desmond L."/>
            <person name="Vincent G.A."/>
            <person name="Silman N.J."/>
            <person name="Brehm J.K."/>
            <person name="Elmore M.J."/>
            <person name="Hudson M.J."/>
            <person name="Forsman M."/>
            <person name="Isherwood K.E."/>
            <person name="Gurycova D."/>
            <person name="Minton N.P."/>
            <person name="Titball R.W."/>
            <person name="Pallen M.J."/>
            <person name="Vipond R."/>
        </authorList>
    </citation>
    <scope>NUCLEOTIDE SEQUENCE [LARGE SCALE GENOMIC DNA]</scope>
    <source>
        <strain>FSC 198</strain>
    </source>
</reference>
<dbReference type="EC" id="2.1.1.182" evidence="1"/>
<dbReference type="EMBL" id="AM286280">
    <property type="protein sequence ID" value="CAL08485.1"/>
    <property type="molecule type" value="Genomic_DNA"/>
</dbReference>
<dbReference type="RefSeq" id="WP_003020263.1">
    <property type="nucleotide sequence ID" value="NC_008245.1"/>
</dbReference>
<dbReference type="SMR" id="Q14IY7"/>
<dbReference type="KEGG" id="ftf:FTF0469"/>
<dbReference type="HOGENOM" id="CLU_041220_0_1_6"/>
<dbReference type="GO" id="GO:0005829">
    <property type="term" value="C:cytosol"/>
    <property type="evidence" value="ECO:0007669"/>
    <property type="project" value="TreeGrafter"/>
</dbReference>
<dbReference type="GO" id="GO:0052908">
    <property type="term" value="F:16S rRNA (adenine(1518)-N(6)/adenine(1519)-N(6))-dimethyltransferase activity"/>
    <property type="evidence" value="ECO:0007669"/>
    <property type="project" value="UniProtKB-EC"/>
</dbReference>
<dbReference type="GO" id="GO:0003723">
    <property type="term" value="F:RNA binding"/>
    <property type="evidence" value="ECO:0007669"/>
    <property type="project" value="UniProtKB-KW"/>
</dbReference>
<dbReference type="FunFam" id="1.10.8.100:FF:000001">
    <property type="entry name" value="Ribosomal RNA small subunit methyltransferase A"/>
    <property type="match status" value="1"/>
</dbReference>
<dbReference type="FunFam" id="3.40.50.150:FF:000023">
    <property type="entry name" value="Ribosomal RNA small subunit methyltransferase A"/>
    <property type="match status" value="1"/>
</dbReference>
<dbReference type="Gene3D" id="1.10.8.100">
    <property type="entry name" value="Ribosomal RNA adenine dimethylase-like, domain 2"/>
    <property type="match status" value="1"/>
</dbReference>
<dbReference type="Gene3D" id="3.40.50.150">
    <property type="entry name" value="Vaccinia Virus protein VP39"/>
    <property type="match status" value="1"/>
</dbReference>
<dbReference type="HAMAP" id="MF_00607">
    <property type="entry name" value="16SrRNA_methyltr_A"/>
    <property type="match status" value="1"/>
</dbReference>
<dbReference type="InterPro" id="IPR001737">
    <property type="entry name" value="KsgA/Erm"/>
</dbReference>
<dbReference type="InterPro" id="IPR023165">
    <property type="entry name" value="rRNA_Ade_diMease-like_C"/>
</dbReference>
<dbReference type="InterPro" id="IPR020596">
    <property type="entry name" value="rRNA_Ade_Mease_Trfase_CS"/>
</dbReference>
<dbReference type="InterPro" id="IPR020598">
    <property type="entry name" value="rRNA_Ade_methylase_Trfase_N"/>
</dbReference>
<dbReference type="InterPro" id="IPR011530">
    <property type="entry name" value="rRNA_adenine_dimethylase"/>
</dbReference>
<dbReference type="InterPro" id="IPR029063">
    <property type="entry name" value="SAM-dependent_MTases_sf"/>
</dbReference>
<dbReference type="NCBIfam" id="TIGR00755">
    <property type="entry name" value="ksgA"/>
    <property type="match status" value="1"/>
</dbReference>
<dbReference type="PANTHER" id="PTHR11727">
    <property type="entry name" value="DIMETHYLADENOSINE TRANSFERASE"/>
    <property type="match status" value="1"/>
</dbReference>
<dbReference type="PANTHER" id="PTHR11727:SF7">
    <property type="entry name" value="DIMETHYLADENOSINE TRANSFERASE-RELATED"/>
    <property type="match status" value="1"/>
</dbReference>
<dbReference type="Pfam" id="PF00398">
    <property type="entry name" value="RrnaAD"/>
    <property type="match status" value="1"/>
</dbReference>
<dbReference type="SMART" id="SM00650">
    <property type="entry name" value="rADc"/>
    <property type="match status" value="1"/>
</dbReference>
<dbReference type="SUPFAM" id="SSF53335">
    <property type="entry name" value="S-adenosyl-L-methionine-dependent methyltransferases"/>
    <property type="match status" value="1"/>
</dbReference>
<dbReference type="PROSITE" id="PS01131">
    <property type="entry name" value="RRNA_A_DIMETH"/>
    <property type="match status" value="1"/>
</dbReference>
<dbReference type="PROSITE" id="PS51689">
    <property type="entry name" value="SAM_RNA_A_N6_MT"/>
    <property type="match status" value="1"/>
</dbReference>
<gene>
    <name evidence="1" type="primary">rsmA</name>
    <name evidence="1" type="synonym">ksgA</name>
    <name type="ordered locus">FTF0469</name>
</gene>
<sequence length="262" mass="29755">MQYKTKAKKSLGQNFLQDENIIRKIVQLANIKKHDIVVEIGPGLGALTRYLLSSSNNVSVVEFDASVIDTLIANCQKYGTPHIYNQDFLKFDISSLENSSNQKIKLIGNLPYNISSPILFKVIKDSDKIVDAHFMLQKEVVERIVSLPNSKSSGRLSVILQYHFDCSMILKIPPEVFYPQPKVDSAILRLKPKNSKELLKNYNFFEEIVKQSFAQRRKTLHNNLKSILKERKIDPSTLPVDTNLRAENLSVGDFVSLANFLS</sequence>
<proteinExistence type="inferred from homology"/>
<name>RSMA_FRAT1</name>